<evidence type="ECO:0000255" key="1">
    <source>
        <dbReference type="HAMAP-Rule" id="MF_00382"/>
    </source>
</evidence>
<evidence type="ECO:0000305" key="2"/>
<dbReference type="EMBL" id="CP000721">
    <property type="protein sequence ID" value="ABR33745.1"/>
    <property type="molecule type" value="Genomic_DNA"/>
</dbReference>
<dbReference type="RefSeq" id="WP_011968897.1">
    <property type="nucleotide sequence ID" value="NC_009617.1"/>
</dbReference>
<dbReference type="SMR" id="A6LTR5"/>
<dbReference type="GeneID" id="66344538"/>
<dbReference type="KEGG" id="cbe:Cbei_1571"/>
<dbReference type="eggNOG" id="COG0292">
    <property type="taxonomic scope" value="Bacteria"/>
</dbReference>
<dbReference type="HOGENOM" id="CLU_123265_0_1_9"/>
<dbReference type="Proteomes" id="UP000000565">
    <property type="component" value="Chromosome"/>
</dbReference>
<dbReference type="GO" id="GO:1990904">
    <property type="term" value="C:ribonucleoprotein complex"/>
    <property type="evidence" value="ECO:0007669"/>
    <property type="project" value="UniProtKB-KW"/>
</dbReference>
<dbReference type="GO" id="GO:0005840">
    <property type="term" value="C:ribosome"/>
    <property type="evidence" value="ECO:0007669"/>
    <property type="project" value="UniProtKB-KW"/>
</dbReference>
<dbReference type="GO" id="GO:0019843">
    <property type="term" value="F:rRNA binding"/>
    <property type="evidence" value="ECO:0007669"/>
    <property type="project" value="UniProtKB-UniRule"/>
</dbReference>
<dbReference type="GO" id="GO:0003735">
    <property type="term" value="F:structural constituent of ribosome"/>
    <property type="evidence" value="ECO:0007669"/>
    <property type="project" value="InterPro"/>
</dbReference>
<dbReference type="GO" id="GO:0000027">
    <property type="term" value="P:ribosomal large subunit assembly"/>
    <property type="evidence" value="ECO:0007669"/>
    <property type="project" value="UniProtKB-UniRule"/>
</dbReference>
<dbReference type="GO" id="GO:0006412">
    <property type="term" value="P:translation"/>
    <property type="evidence" value="ECO:0007669"/>
    <property type="project" value="InterPro"/>
</dbReference>
<dbReference type="CDD" id="cd07026">
    <property type="entry name" value="Ribosomal_L20"/>
    <property type="match status" value="1"/>
</dbReference>
<dbReference type="FunFam" id="1.10.1900.20:FF:000001">
    <property type="entry name" value="50S ribosomal protein L20"/>
    <property type="match status" value="1"/>
</dbReference>
<dbReference type="Gene3D" id="6.10.160.10">
    <property type="match status" value="1"/>
</dbReference>
<dbReference type="Gene3D" id="1.10.1900.20">
    <property type="entry name" value="Ribosomal protein L20"/>
    <property type="match status" value="1"/>
</dbReference>
<dbReference type="HAMAP" id="MF_00382">
    <property type="entry name" value="Ribosomal_bL20"/>
    <property type="match status" value="1"/>
</dbReference>
<dbReference type="InterPro" id="IPR005813">
    <property type="entry name" value="Ribosomal_bL20"/>
</dbReference>
<dbReference type="InterPro" id="IPR049946">
    <property type="entry name" value="RIBOSOMAL_L20_CS"/>
</dbReference>
<dbReference type="InterPro" id="IPR035566">
    <property type="entry name" value="Ribosomal_protein_bL20_C"/>
</dbReference>
<dbReference type="NCBIfam" id="TIGR01032">
    <property type="entry name" value="rplT_bact"/>
    <property type="match status" value="1"/>
</dbReference>
<dbReference type="PANTHER" id="PTHR10986">
    <property type="entry name" value="39S RIBOSOMAL PROTEIN L20"/>
    <property type="match status" value="1"/>
</dbReference>
<dbReference type="Pfam" id="PF00453">
    <property type="entry name" value="Ribosomal_L20"/>
    <property type="match status" value="1"/>
</dbReference>
<dbReference type="PRINTS" id="PR00062">
    <property type="entry name" value="RIBOSOMALL20"/>
</dbReference>
<dbReference type="SUPFAM" id="SSF74731">
    <property type="entry name" value="Ribosomal protein L20"/>
    <property type="match status" value="1"/>
</dbReference>
<dbReference type="PROSITE" id="PS00937">
    <property type="entry name" value="RIBOSOMAL_L20"/>
    <property type="match status" value="1"/>
</dbReference>
<protein>
    <recommendedName>
        <fullName evidence="1">Large ribosomal subunit protein bL20</fullName>
    </recommendedName>
    <alternativeName>
        <fullName evidence="2">50S ribosomal protein L20</fullName>
    </alternativeName>
</protein>
<accession>A6LTR5</accession>
<reference key="1">
    <citation type="submission" date="2007-06" db="EMBL/GenBank/DDBJ databases">
        <title>Complete sequence of Clostridium beijerinckii NCIMB 8052.</title>
        <authorList>
            <consortium name="US DOE Joint Genome Institute"/>
            <person name="Copeland A."/>
            <person name="Lucas S."/>
            <person name="Lapidus A."/>
            <person name="Barry K."/>
            <person name="Detter J.C."/>
            <person name="Glavina del Rio T."/>
            <person name="Hammon N."/>
            <person name="Israni S."/>
            <person name="Dalin E."/>
            <person name="Tice H."/>
            <person name="Pitluck S."/>
            <person name="Sims D."/>
            <person name="Brettin T."/>
            <person name="Bruce D."/>
            <person name="Tapia R."/>
            <person name="Brainard J."/>
            <person name="Schmutz J."/>
            <person name="Larimer F."/>
            <person name="Land M."/>
            <person name="Hauser L."/>
            <person name="Kyrpides N."/>
            <person name="Mikhailova N."/>
            <person name="Bennet G."/>
            <person name="Cann I."/>
            <person name="Chen J.-S."/>
            <person name="Contreras A.L."/>
            <person name="Jones D."/>
            <person name="Kashket E."/>
            <person name="Mitchell W."/>
            <person name="Stoddard S."/>
            <person name="Schwarz W."/>
            <person name="Qureshi N."/>
            <person name="Young M."/>
            <person name="Shi Z."/>
            <person name="Ezeji T."/>
            <person name="White B."/>
            <person name="Blaschek H."/>
            <person name="Richardson P."/>
        </authorList>
    </citation>
    <scope>NUCLEOTIDE SEQUENCE [LARGE SCALE GENOMIC DNA]</scope>
    <source>
        <strain>ATCC 51743 / NCIMB 8052</strain>
    </source>
</reference>
<name>RL20_CLOB8</name>
<gene>
    <name evidence="1" type="primary">rplT</name>
    <name type="ordered locus">Cbei_1571</name>
</gene>
<proteinExistence type="inferred from homology"/>
<organism>
    <name type="scientific">Clostridium beijerinckii (strain ATCC 51743 / NCIMB 8052)</name>
    <name type="common">Clostridium acetobutylicum</name>
    <dbReference type="NCBI Taxonomy" id="290402"/>
    <lineage>
        <taxon>Bacteria</taxon>
        <taxon>Bacillati</taxon>
        <taxon>Bacillota</taxon>
        <taxon>Clostridia</taxon>
        <taxon>Eubacteriales</taxon>
        <taxon>Clostridiaceae</taxon>
        <taxon>Clostridium</taxon>
    </lineage>
</organism>
<comment type="function">
    <text evidence="1">Binds directly to 23S ribosomal RNA and is necessary for the in vitro assembly process of the 50S ribosomal subunit. It is not involved in the protein synthesizing functions of that subunit.</text>
</comment>
<comment type="similarity">
    <text evidence="1">Belongs to the bacterial ribosomal protein bL20 family.</text>
</comment>
<sequence length="119" mass="13629">MARVKRAKNSRKNHKKVLKLAKGYYGGKSKLYKTANESVIRALRNSYVGRKNKKRDYRSLWIARINAATRINNLSYSKFMNGIKLAGIDINRKMLSEIAINDPKAFTELVEVAKKQLNA</sequence>
<keyword id="KW-0687">Ribonucleoprotein</keyword>
<keyword id="KW-0689">Ribosomal protein</keyword>
<keyword id="KW-0694">RNA-binding</keyword>
<keyword id="KW-0699">rRNA-binding</keyword>
<feature type="chain" id="PRO_1000080064" description="Large ribosomal subunit protein bL20">
    <location>
        <begin position="1"/>
        <end position="119"/>
    </location>
</feature>